<dbReference type="EC" id="2.7.7.27" evidence="1"/>
<dbReference type="EMBL" id="CP000267">
    <property type="protein sequence ID" value="ABD68265.1"/>
    <property type="molecule type" value="Genomic_DNA"/>
</dbReference>
<dbReference type="RefSeq" id="WP_011462838.1">
    <property type="nucleotide sequence ID" value="NC_007908.1"/>
</dbReference>
<dbReference type="SMR" id="Q221N8"/>
<dbReference type="STRING" id="338969.Rfer_0513"/>
<dbReference type="KEGG" id="rfr:Rfer_0513"/>
<dbReference type="eggNOG" id="COG0448">
    <property type="taxonomic scope" value="Bacteria"/>
</dbReference>
<dbReference type="HOGENOM" id="CLU_029499_14_1_4"/>
<dbReference type="OrthoDB" id="9801810at2"/>
<dbReference type="UniPathway" id="UPA00164"/>
<dbReference type="Proteomes" id="UP000008332">
    <property type="component" value="Chromosome"/>
</dbReference>
<dbReference type="GO" id="GO:0005524">
    <property type="term" value="F:ATP binding"/>
    <property type="evidence" value="ECO:0007669"/>
    <property type="project" value="UniProtKB-KW"/>
</dbReference>
<dbReference type="GO" id="GO:0008878">
    <property type="term" value="F:glucose-1-phosphate adenylyltransferase activity"/>
    <property type="evidence" value="ECO:0007669"/>
    <property type="project" value="UniProtKB-UniRule"/>
</dbReference>
<dbReference type="GO" id="GO:0005978">
    <property type="term" value="P:glycogen biosynthetic process"/>
    <property type="evidence" value="ECO:0007669"/>
    <property type="project" value="UniProtKB-UniRule"/>
</dbReference>
<dbReference type="CDD" id="cd02508">
    <property type="entry name" value="ADP_Glucose_PP"/>
    <property type="match status" value="1"/>
</dbReference>
<dbReference type="CDD" id="cd04651">
    <property type="entry name" value="LbH_G1P_AT_C"/>
    <property type="match status" value="1"/>
</dbReference>
<dbReference type="Gene3D" id="2.160.10.10">
    <property type="entry name" value="Hexapeptide repeat proteins"/>
    <property type="match status" value="1"/>
</dbReference>
<dbReference type="Gene3D" id="3.90.550.10">
    <property type="entry name" value="Spore Coat Polysaccharide Biosynthesis Protein SpsA, Chain A"/>
    <property type="match status" value="1"/>
</dbReference>
<dbReference type="HAMAP" id="MF_00624">
    <property type="entry name" value="GlgC"/>
    <property type="match status" value="1"/>
</dbReference>
<dbReference type="InterPro" id="IPR011831">
    <property type="entry name" value="ADP-Glc_PPase"/>
</dbReference>
<dbReference type="InterPro" id="IPR005836">
    <property type="entry name" value="ADP_Glu_pyroP_CS"/>
</dbReference>
<dbReference type="InterPro" id="IPR023049">
    <property type="entry name" value="GlgC_bac"/>
</dbReference>
<dbReference type="InterPro" id="IPR056818">
    <property type="entry name" value="GlmU/GlgC-like_hexapep"/>
</dbReference>
<dbReference type="InterPro" id="IPR005835">
    <property type="entry name" value="NTP_transferase_dom"/>
</dbReference>
<dbReference type="InterPro" id="IPR029044">
    <property type="entry name" value="Nucleotide-diphossugar_trans"/>
</dbReference>
<dbReference type="InterPro" id="IPR011004">
    <property type="entry name" value="Trimer_LpxA-like_sf"/>
</dbReference>
<dbReference type="NCBIfam" id="TIGR02091">
    <property type="entry name" value="glgC"/>
    <property type="match status" value="1"/>
</dbReference>
<dbReference type="NCBIfam" id="NF001947">
    <property type="entry name" value="PRK00725.1"/>
    <property type="match status" value="1"/>
</dbReference>
<dbReference type="NCBIfam" id="NF002023">
    <property type="entry name" value="PRK00844.1"/>
    <property type="match status" value="1"/>
</dbReference>
<dbReference type="PANTHER" id="PTHR43523:SF2">
    <property type="entry name" value="GLUCOSE-1-PHOSPHATE ADENYLYLTRANSFERASE"/>
    <property type="match status" value="1"/>
</dbReference>
<dbReference type="PANTHER" id="PTHR43523">
    <property type="entry name" value="GLUCOSE-1-PHOSPHATE ADENYLYLTRANSFERASE-RELATED"/>
    <property type="match status" value="1"/>
</dbReference>
<dbReference type="Pfam" id="PF24894">
    <property type="entry name" value="Hexapep_GlmU"/>
    <property type="match status" value="1"/>
</dbReference>
<dbReference type="Pfam" id="PF00483">
    <property type="entry name" value="NTP_transferase"/>
    <property type="match status" value="1"/>
</dbReference>
<dbReference type="SUPFAM" id="SSF53448">
    <property type="entry name" value="Nucleotide-diphospho-sugar transferases"/>
    <property type="match status" value="1"/>
</dbReference>
<dbReference type="SUPFAM" id="SSF51161">
    <property type="entry name" value="Trimeric LpxA-like enzymes"/>
    <property type="match status" value="1"/>
</dbReference>
<dbReference type="PROSITE" id="PS00808">
    <property type="entry name" value="ADP_GLC_PYROPHOSPH_1"/>
    <property type="match status" value="1"/>
</dbReference>
<dbReference type="PROSITE" id="PS00809">
    <property type="entry name" value="ADP_GLC_PYROPHOSPH_2"/>
    <property type="match status" value="1"/>
</dbReference>
<dbReference type="PROSITE" id="PS00810">
    <property type="entry name" value="ADP_GLC_PYROPHOSPH_3"/>
    <property type="match status" value="1"/>
</dbReference>
<protein>
    <recommendedName>
        <fullName evidence="1">Glucose-1-phosphate adenylyltransferase</fullName>
        <ecNumber evidence="1">2.7.7.27</ecNumber>
    </recommendedName>
    <alternativeName>
        <fullName evidence="1">ADP-glucose pyrophosphorylase</fullName>
        <shortName evidence="1">ADPGlc PPase</shortName>
    </alternativeName>
    <alternativeName>
        <fullName evidence="1">ADP-glucose synthase</fullName>
    </alternativeName>
</protein>
<reference key="1">
    <citation type="submission" date="2006-02" db="EMBL/GenBank/DDBJ databases">
        <title>Complete sequence of chromosome of Rhodoferax ferrireducens DSM 15236.</title>
        <authorList>
            <person name="Copeland A."/>
            <person name="Lucas S."/>
            <person name="Lapidus A."/>
            <person name="Barry K."/>
            <person name="Detter J.C."/>
            <person name="Glavina del Rio T."/>
            <person name="Hammon N."/>
            <person name="Israni S."/>
            <person name="Pitluck S."/>
            <person name="Brettin T."/>
            <person name="Bruce D."/>
            <person name="Han C."/>
            <person name="Tapia R."/>
            <person name="Gilna P."/>
            <person name="Kiss H."/>
            <person name="Schmutz J."/>
            <person name="Larimer F."/>
            <person name="Land M."/>
            <person name="Kyrpides N."/>
            <person name="Ivanova N."/>
            <person name="Richardson P."/>
        </authorList>
    </citation>
    <scope>NUCLEOTIDE SEQUENCE [LARGE SCALE GENOMIC DNA]</scope>
    <source>
        <strain>ATCC BAA-621 / DSM 15236 / T118</strain>
    </source>
</reference>
<accession>Q221N8</accession>
<feature type="chain" id="PRO_0000261890" description="Glucose-1-phosphate adenylyltransferase">
    <location>
        <begin position="1"/>
        <end position="423"/>
    </location>
</feature>
<feature type="binding site" evidence="1">
    <location>
        <position position="107"/>
    </location>
    <ligand>
        <name>alpha-D-glucose 1-phosphate</name>
        <dbReference type="ChEBI" id="CHEBI:58601"/>
    </ligand>
</feature>
<feature type="binding site" evidence="1">
    <location>
        <position position="172"/>
    </location>
    <ligand>
        <name>alpha-D-glucose 1-phosphate</name>
        <dbReference type="ChEBI" id="CHEBI:58601"/>
    </ligand>
</feature>
<feature type="binding site" evidence="1">
    <location>
        <begin position="187"/>
        <end position="188"/>
    </location>
    <ligand>
        <name>alpha-D-glucose 1-phosphate</name>
        <dbReference type="ChEBI" id="CHEBI:58601"/>
    </ligand>
</feature>
<feature type="binding site" evidence="1">
    <location>
        <position position="205"/>
    </location>
    <ligand>
        <name>alpha-D-glucose 1-phosphate</name>
        <dbReference type="ChEBI" id="CHEBI:58601"/>
    </ligand>
</feature>
<name>GLGC_ALBFT</name>
<proteinExistence type="inferred from homology"/>
<evidence type="ECO:0000255" key="1">
    <source>
        <dbReference type="HAMAP-Rule" id="MF_00624"/>
    </source>
</evidence>
<keyword id="KW-0067">ATP-binding</keyword>
<keyword id="KW-0119">Carbohydrate metabolism</keyword>
<keyword id="KW-0320">Glycogen biosynthesis</keyword>
<keyword id="KW-0321">Glycogen metabolism</keyword>
<keyword id="KW-0547">Nucleotide-binding</keyword>
<keyword id="KW-0548">Nucleotidyltransferase</keyword>
<keyword id="KW-1185">Reference proteome</keyword>
<keyword id="KW-0808">Transferase</keyword>
<comment type="function">
    <text evidence="1">Involved in the biosynthesis of ADP-glucose, a building block required for the elongation reactions to produce glycogen. Catalyzes the reaction between ATP and alpha-D-glucose 1-phosphate (G1P) to produce pyrophosphate and ADP-Glc.</text>
</comment>
<comment type="catalytic activity">
    <reaction evidence="1">
        <text>alpha-D-glucose 1-phosphate + ATP + H(+) = ADP-alpha-D-glucose + diphosphate</text>
        <dbReference type="Rhea" id="RHEA:12120"/>
        <dbReference type="ChEBI" id="CHEBI:15378"/>
        <dbReference type="ChEBI" id="CHEBI:30616"/>
        <dbReference type="ChEBI" id="CHEBI:33019"/>
        <dbReference type="ChEBI" id="CHEBI:57498"/>
        <dbReference type="ChEBI" id="CHEBI:58601"/>
        <dbReference type="EC" id="2.7.7.27"/>
    </reaction>
</comment>
<comment type="pathway">
    <text evidence="1">Glycan biosynthesis; glycogen biosynthesis.</text>
</comment>
<comment type="subunit">
    <text evidence="1">Homotetramer.</text>
</comment>
<comment type="similarity">
    <text evidence="1">Belongs to the bacterial/plant glucose-1-phosphate adenylyltransferase family.</text>
</comment>
<organism>
    <name type="scientific">Albidiferax ferrireducens (strain ATCC BAA-621 / DSM 15236 / T118)</name>
    <name type="common">Rhodoferax ferrireducens</name>
    <dbReference type="NCBI Taxonomy" id="338969"/>
    <lineage>
        <taxon>Bacteria</taxon>
        <taxon>Pseudomonadati</taxon>
        <taxon>Pseudomonadota</taxon>
        <taxon>Betaproteobacteria</taxon>
        <taxon>Burkholderiales</taxon>
        <taxon>Comamonadaceae</taxon>
        <taxon>Rhodoferax</taxon>
    </lineage>
</organism>
<sequence length="423" mass="46790">MKDGAHHRPVRRTISLVLAGGRGSRLQDLTENCAKPAVHFGGKFRIIDFVLSNCVNSGLHRIGVLTQYKSHSLLRHLQHGWSFLRNEVNEFIDLLPAQQRVDEASWYRGTADAVYQNIDILREHDPKYILVLAGDHVYKMNYASLIEDHVALGAPCTVACIEVPLAEASAFGVMTVDAMRHITRFDEKPAHPQPMLDQPEQALVSMGVYVFDADYLFAALQTDIEDAASHHDFGKDLIPAIVSRGEAMAHPFDLSCVKSSPESPSYWRDVGTVDAYWAANIDLTATIPQLDLYDKDWPIWTYQPTSPPAKFVFDDEGRRGMAVDSLVSGGCIVSGALVRRSVLFTGVHLHSYSSVEESVLLPEADVGRHCRLRKVVVDEGCRIPAGMTIGFDAEDDARRFHVSADGVVLVTVAMLEALRVSQA</sequence>
<gene>
    <name evidence="1" type="primary">glgC</name>
    <name type="ordered locus">Rfer_0513</name>
</gene>